<keyword id="KW-0067">ATP-binding</keyword>
<keyword id="KW-0963">Cytoplasm</keyword>
<keyword id="KW-0347">Helicase</keyword>
<keyword id="KW-0378">Hydrolase</keyword>
<keyword id="KW-0479">Metal-binding</keyword>
<keyword id="KW-0866">Nonsense-mediated mRNA decay</keyword>
<keyword id="KW-0547">Nucleotide-binding</keyword>
<keyword id="KW-1185">Reference proteome</keyword>
<keyword id="KW-0862">Zinc</keyword>
<keyword id="KW-0863">Zinc-finger</keyword>
<name>RENT1_SCHPO</name>
<comment type="function">
    <text evidence="1">RNA-dependent helicase required for nonsense-mediated decay (NMD) of aberrant mRNAs containing premature stop codons and modulates the expression level of normal mRNAs (By similarity). Also capable of unwinding double-stranded DNA and translocating on single-stranded DNA (By similarity).</text>
</comment>
<comment type="catalytic activity">
    <reaction evidence="1">
        <text>ATP + H2O = ADP + phosphate + H(+)</text>
        <dbReference type="Rhea" id="RHEA:13065"/>
        <dbReference type="ChEBI" id="CHEBI:15377"/>
        <dbReference type="ChEBI" id="CHEBI:15378"/>
        <dbReference type="ChEBI" id="CHEBI:30616"/>
        <dbReference type="ChEBI" id="CHEBI:43474"/>
        <dbReference type="ChEBI" id="CHEBI:456216"/>
        <dbReference type="EC" id="3.6.4.12"/>
    </reaction>
    <physiologicalReaction direction="left-to-right" evidence="1">
        <dbReference type="Rhea" id="RHEA:13066"/>
    </physiologicalReaction>
</comment>
<comment type="catalytic activity">
    <reaction evidence="2">
        <text>ATP + H2O = ADP + phosphate + H(+)</text>
        <dbReference type="Rhea" id="RHEA:13065"/>
        <dbReference type="ChEBI" id="CHEBI:15377"/>
        <dbReference type="ChEBI" id="CHEBI:15378"/>
        <dbReference type="ChEBI" id="CHEBI:30616"/>
        <dbReference type="ChEBI" id="CHEBI:43474"/>
        <dbReference type="ChEBI" id="CHEBI:456216"/>
        <dbReference type="EC" id="3.6.4.13"/>
    </reaction>
    <physiologicalReaction direction="left-to-right" evidence="2">
        <dbReference type="Rhea" id="RHEA:13066"/>
    </physiologicalReaction>
</comment>
<comment type="subcellular location">
    <subcellularLocation>
        <location evidence="5">Cytoplasm</location>
    </subcellularLocation>
    <text evidence="1">Associates with polysomes.</text>
</comment>
<comment type="similarity">
    <text evidence="6">Belongs to the DNA2/NAM7 helicase family.</text>
</comment>
<dbReference type="EC" id="3.6.4.12" evidence="1"/>
<dbReference type="EC" id="3.6.4.13" evidence="2"/>
<dbReference type="EMBL" id="CU329670">
    <property type="protein sequence ID" value="CAA91194.2"/>
    <property type="molecule type" value="Genomic_DNA"/>
</dbReference>
<dbReference type="PIR" id="S62476">
    <property type="entry name" value="S62476"/>
</dbReference>
<dbReference type="RefSeq" id="NP_593080.1">
    <property type="nucleotide sequence ID" value="NM_001018477.2"/>
</dbReference>
<dbReference type="SMR" id="Q09820"/>
<dbReference type="BioGRID" id="278793">
    <property type="interactions" value="65"/>
</dbReference>
<dbReference type="FunCoup" id="Q09820">
    <property type="interactions" value="1192"/>
</dbReference>
<dbReference type="STRING" id="284812.Q09820"/>
<dbReference type="iPTMnet" id="Q09820"/>
<dbReference type="PaxDb" id="4896-SPAC16C9.06c.1"/>
<dbReference type="EnsemblFungi" id="SPAC16C9.06c.1">
    <property type="protein sequence ID" value="SPAC16C9.06c.1:pep"/>
    <property type="gene ID" value="SPAC16C9.06c"/>
</dbReference>
<dbReference type="GeneID" id="2542327"/>
<dbReference type="KEGG" id="spo:2542327"/>
<dbReference type="PomBase" id="SPAC16C9.06c">
    <property type="gene designation" value="upf1"/>
</dbReference>
<dbReference type="VEuPathDB" id="FungiDB:SPAC16C9.06c"/>
<dbReference type="eggNOG" id="KOG1802">
    <property type="taxonomic scope" value="Eukaryota"/>
</dbReference>
<dbReference type="HOGENOM" id="CLU_001666_4_3_1"/>
<dbReference type="InParanoid" id="Q09820"/>
<dbReference type="OMA" id="QYMQMNG"/>
<dbReference type="PhylomeDB" id="Q09820"/>
<dbReference type="Reactome" id="R-SPO-975956">
    <property type="pathway name" value="Nonsense Mediated Decay (NMD) independent of the Exon Junction Complex (EJC)"/>
</dbReference>
<dbReference type="Reactome" id="R-SPO-975957">
    <property type="pathway name" value="Nonsense Mediated Decay (NMD) enhanced by the Exon Junction Complex (EJC)"/>
</dbReference>
<dbReference type="PRO" id="PR:Q09820"/>
<dbReference type="Proteomes" id="UP000002485">
    <property type="component" value="Chromosome I"/>
</dbReference>
<dbReference type="GO" id="GO:0005737">
    <property type="term" value="C:cytoplasm"/>
    <property type="evidence" value="ECO:0000318"/>
    <property type="project" value="GO_Central"/>
</dbReference>
<dbReference type="GO" id="GO:0005829">
    <property type="term" value="C:cytosol"/>
    <property type="evidence" value="ECO:0007005"/>
    <property type="project" value="PomBase"/>
</dbReference>
<dbReference type="GO" id="GO:0005524">
    <property type="term" value="F:ATP binding"/>
    <property type="evidence" value="ECO:0000305"/>
    <property type="project" value="PomBase"/>
</dbReference>
<dbReference type="GO" id="GO:0016887">
    <property type="term" value="F:ATP hydrolysis activity"/>
    <property type="evidence" value="ECO:0000250"/>
    <property type="project" value="UniProtKB"/>
</dbReference>
<dbReference type="GO" id="GO:0036121">
    <property type="term" value="F:double-stranded DNA helicase activity"/>
    <property type="evidence" value="ECO:0000250"/>
    <property type="project" value="UniProtKB"/>
</dbReference>
<dbReference type="GO" id="GO:0003723">
    <property type="term" value="F:RNA binding"/>
    <property type="evidence" value="ECO:0000318"/>
    <property type="project" value="GO_Central"/>
</dbReference>
<dbReference type="GO" id="GO:0003724">
    <property type="term" value="F:RNA helicase activity"/>
    <property type="evidence" value="ECO:0000318"/>
    <property type="project" value="GO_Central"/>
</dbReference>
<dbReference type="GO" id="GO:0003697">
    <property type="term" value="F:single-stranded DNA binding"/>
    <property type="evidence" value="ECO:0000250"/>
    <property type="project" value="UniProtKB"/>
</dbReference>
<dbReference type="GO" id="GO:0008270">
    <property type="term" value="F:zinc ion binding"/>
    <property type="evidence" value="ECO:0007669"/>
    <property type="project" value="UniProtKB-KW"/>
</dbReference>
<dbReference type="GO" id="GO:0070478">
    <property type="term" value="P:nuclear-transcribed mRNA catabolic process, 3'-5' exonucleolytic nonsense-mediated decay"/>
    <property type="evidence" value="ECO:0000266"/>
    <property type="project" value="PomBase"/>
</dbReference>
<dbReference type="GO" id="GO:0000184">
    <property type="term" value="P:nuclear-transcribed mRNA catabolic process, nonsense-mediated decay"/>
    <property type="evidence" value="ECO:0000315"/>
    <property type="project" value="PomBase"/>
</dbReference>
<dbReference type="GO" id="GO:2000815">
    <property type="term" value="P:regulation of mRNA stability involved in response to oxidative stress"/>
    <property type="evidence" value="ECO:0000315"/>
    <property type="project" value="PomBase"/>
</dbReference>
<dbReference type="CDD" id="cd21407">
    <property type="entry name" value="1B_UPF1-like"/>
    <property type="match status" value="1"/>
</dbReference>
<dbReference type="CDD" id="cd18039">
    <property type="entry name" value="DEXXQc_UPF1"/>
    <property type="match status" value="1"/>
</dbReference>
<dbReference type="CDD" id="cd18808">
    <property type="entry name" value="SF1_C_Upf1"/>
    <property type="match status" value="1"/>
</dbReference>
<dbReference type="CDD" id="cd21400">
    <property type="entry name" value="ZBD_UPF1-like"/>
    <property type="match status" value="1"/>
</dbReference>
<dbReference type="FunFam" id="3.40.50.300:FF:000097">
    <property type="entry name" value="Regulator of nonsense transcripts 1"/>
    <property type="match status" value="1"/>
</dbReference>
<dbReference type="Gene3D" id="2.40.30.230">
    <property type="match status" value="1"/>
</dbReference>
<dbReference type="Gene3D" id="6.10.140.1240">
    <property type="match status" value="1"/>
</dbReference>
<dbReference type="Gene3D" id="3.40.50.300">
    <property type="entry name" value="P-loop containing nucleotide triphosphate hydrolases"/>
    <property type="match status" value="2"/>
</dbReference>
<dbReference type="InterPro" id="IPR003593">
    <property type="entry name" value="AAA+_ATPase"/>
</dbReference>
<dbReference type="InterPro" id="IPR045055">
    <property type="entry name" value="DNA2/NAM7-like"/>
</dbReference>
<dbReference type="InterPro" id="IPR041679">
    <property type="entry name" value="DNA2/NAM7-like_C"/>
</dbReference>
<dbReference type="InterPro" id="IPR041677">
    <property type="entry name" value="DNA2/NAM7_AAA_11"/>
</dbReference>
<dbReference type="InterPro" id="IPR006935">
    <property type="entry name" value="Helicase/UvrB_N"/>
</dbReference>
<dbReference type="InterPro" id="IPR027417">
    <property type="entry name" value="P-loop_NTPase"/>
</dbReference>
<dbReference type="InterPro" id="IPR047187">
    <property type="entry name" value="SF1_C_Upf1"/>
</dbReference>
<dbReference type="InterPro" id="IPR040812">
    <property type="entry name" value="UPF1_1B_dom"/>
</dbReference>
<dbReference type="InterPro" id="IPR018999">
    <property type="entry name" value="UPF1_CH/ZBD"/>
</dbReference>
<dbReference type="PANTHER" id="PTHR10887">
    <property type="entry name" value="DNA2/NAM7 HELICASE FAMILY"/>
    <property type="match status" value="1"/>
</dbReference>
<dbReference type="PANTHER" id="PTHR10887:SF364">
    <property type="entry name" value="REGULATOR OF NONSENSE TRANSCRIPTS 1"/>
    <property type="match status" value="1"/>
</dbReference>
<dbReference type="Pfam" id="PF13086">
    <property type="entry name" value="AAA_11"/>
    <property type="match status" value="1"/>
</dbReference>
<dbReference type="Pfam" id="PF13087">
    <property type="entry name" value="AAA_12"/>
    <property type="match status" value="1"/>
</dbReference>
<dbReference type="Pfam" id="PF04851">
    <property type="entry name" value="ResIII"/>
    <property type="match status" value="1"/>
</dbReference>
<dbReference type="Pfam" id="PF18141">
    <property type="entry name" value="UPF1_1B_dom"/>
    <property type="match status" value="1"/>
</dbReference>
<dbReference type="Pfam" id="PF09416">
    <property type="entry name" value="UPF1_Zn_bind"/>
    <property type="match status" value="1"/>
</dbReference>
<dbReference type="SMART" id="SM00382">
    <property type="entry name" value="AAA"/>
    <property type="match status" value="1"/>
</dbReference>
<dbReference type="SUPFAM" id="SSF52540">
    <property type="entry name" value="P-loop containing nucleoside triphosphate hydrolases"/>
    <property type="match status" value="1"/>
</dbReference>
<dbReference type="PROSITE" id="PS51997">
    <property type="entry name" value="UPF1_CH_RICH"/>
    <property type="match status" value="1"/>
</dbReference>
<organism>
    <name type="scientific">Schizosaccharomyces pombe (strain 972 / ATCC 24843)</name>
    <name type="common">Fission yeast</name>
    <dbReference type="NCBI Taxonomy" id="284812"/>
    <lineage>
        <taxon>Eukaryota</taxon>
        <taxon>Fungi</taxon>
        <taxon>Dikarya</taxon>
        <taxon>Ascomycota</taxon>
        <taxon>Taphrinomycotina</taxon>
        <taxon>Schizosaccharomycetes</taxon>
        <taxon>Schizosaccharomycetales</taxon>
        <taxon>Schizosaccharomycetaceae</taxon>
        <taxon>Schizosaccharomyces</taxon>
    </lineage>
</organism>
<gene>
    <name type="primary">upf1</name>
    <name type="ORF">SPAC16C9.06c</name>
</gene>
<sequence>MSLGLQPNNDISSLVSSKNMTSENGLEHQFEELLVEKQYSEEHCAYCHIKNPNSILKCLHCNKWFCNVRGKSGASHIISHLVRARHKQVALHSHSSLSDTVLECYNCGTRNVFLLGFIPAKAKTVVVLLCRQPCARASIAKDMNWDLTQWQPIISDRQFLPWLITPPSEEEQKLAIPITSQQMVRLEELWRKDPNANLEDLDKPIEDDSLPSVELRYKDAHAYQAVLSPLIQAEADYDKRLKESQTQKDVVVRWDQAINKRYTAWFLLPKLESGEIRLAIGDEMKLTYEGELRAPWSSTGYVIKIPNNVSDEVGLELKRSDKVPIECTHNFSVDYVWKSTSFDRMQTALRLFATDGSRLSSFLYHKLLGHDIPPSFLKPKLPSDLSVPNLPKLNASQSEAVRAVLSKPLSLIQGPPGTGKTVTSASVVYHLATMQSRKRKSHSPVLVCAPSNVAVDQLAEKIHRTGLRVVRVAAKSREDIESSVSFLSLHEQIKNYKFNPELQRLLKLRSENNELSIQDEKKLRILVAAAEKELLRAAHVICCTCVGAGDRRISKYKFRSVLIDEATQASEPECMIPLVLGAKQVVLVGDHQQLGPVVMNKKVALASLSQSLFERLIILGNSPFRLVVQYRMHPCLSEFPSNTFYEGTLQNGVTTSERIARHVDFPWIQPDSPLMFYANFGQEELSASGTSFLNRTEASTCEKIVTTFLRSNVLPEQIGIVTPYDGQRSYIVQYMQNNGSMQKDLYKAVEVASVDAFQGREKDFIILSCVRSSEHQGIGFVNDPRRLNVALTRAKYGVIVLGNPKVLAKHALWYHFVLHCKEKGYLVEGTLNSLQKFSLTLTPPQKPQKFKRDLNVQRSLSPIQNAGSAMLPSFSNLPNLYSSSYLEEWNVFAQYKRRESNATDFEDFRSQVGDDESKFDEPTRF</sequence>
<reference key="1">
    <citation type="journal article" date="2002" name="Nature">
        <title>The genome sequence of Schizosaccharomyces pombe.</title>
        <authorList>
            <person name="Wood V."/>
            <person name="Gwilliam R."/>
            <person name="Rajandream M.A."/>
            <person name="Lyne M.H."/>
            <person name="Lyne R."/>
            <person name="Stewart A."/>
            <person name="Sgouros J.G."/>
            <person name="Peat N."/>
            <person name="Hayles J."/>
            <person name="Baker S.G."/>
            <person name="Basham D."/>
            <person name="Bowman S."/>
            <person name="Brooks K."/>
            <person name="Brown D."/>
            <person name="Brown S."/>
            <person name="Chillingworth T."/>
            <person name="Churcher C.M."/>
            <person name="Collins M."/>
            <person name="Connor R."/>
            <person name="Cronin A."/>
            <person name="Davis P."/>
            <person name="Feltwell T."/>
            <person name="Fraser A."/>
            <person name="Gentles S."/>
            <person name="Goble A."/>
            <person name="Hamlin N."/>
            <person name="Harris D.E."/>
            <person name="Hidalgo J."/>
            <person name="Hodgson G."/>
            <person name="Holroyd S."/>
            <person name="Hornsby T."/>
            <person name="Howarth S."/>
            <person name="Huckle E.J."/>
            <person name="Hunt S."/>
            <person name="Jagels K."/>
            <person name="James K.D."/>
            <person name="Jones L."/>
            <person name="Jones M."/>
            <person name="Leather S."/>
            <person name="McDonald S."/>
            <person name="McLean J."/>
            <person name="Mooney P."/>
            <person name="Moule S."/>
            <person name="Mungall K.L."/>
            <person name="Murphy L.D."/>
            <person name="Niblett D."/>
            <person name="Odell C."/>
            <person name="Oliver K."/>
            <person name="O'Neil S."/>
            <person name="Pearson D."/>
            <person name="Quail M.A."/>
            <person name="Rabbinowitsch E."/>
            <person name="Rutherford K.M."/>
            <person name="Rutter S."/>
            <person name="Saunders D."/>
            <person name="Seeger K."/>
            <person name="Sharp S."/>
            <person name="Skelton J."/>
            <person name="Simmonds M.N."/>
            <person name="Squares R."/>
            <person name="Squares S."/>
            <person name="Stevens K."/>
            <person name="Taylor K."/>
            <person name="Taylor R.G."/>
            <person name="Tivey A."/>
            <person name="Walsh S.V."/>
            <person name="Warren T."/>
            <person name="Whitehead S."/>
            <person name="Woodward J.R."/>
            <person name="Volckaert G."/>
            <person name="Aert R."/>
            <person name="Robben J."/>
            <person name="Grymonprez B."/>
            <person name="Weltjens I."/>
            <person name="Vanstreels E."/>
            <person name="Rieger M."/>
            <person name="Schaefer M."/>
            <person name="Mueller-Auer S."/>
            <person name="Gabel C."/>
            <person name="Fuchs M."/>
            <person name="Duesterhoeft A."/>
            <person name="Fritzc C."/>
            <person name="Holzer E."/>
            <person name="Moestl D."/>
            <person name="Hilbert H."/>
            <person name="Borzym K."/>
            <person name="Langer I."/>
            <person name="Beck A."/>
            <person name="Lehrach H."/>
            <person name="Reinhardt R."/>
            <person name="Pohl T.M."/>
            <person name="Eger P."/>
            <person name="Zimmermann W."/>
            <person name="Wedler H."/>
            <person name="Wambutt R."/>
            <person name="Purnelle B."/>
            <person name="Goffeau A."/>
            <person name="Cadieu E."/>
            <person name="Dreano S."/>
            <person name="Gloux S."/>
            <person name="Lelaure V."/>
            <person name="Mottier S."/>
            <person name="Galibert F."/>
            <person name="Aves S.J."/>
            <person name="Xiang Z."/>
            <person name="Hunt C."/>
            <person name="Moore K."/>
            <person name="Hurst S.M."/>
            <person name="Lucas M."/>
            <person name="Rochet M."/>
            <person name="Gaillardin C."/>
            <person name="Tallada V.A."/>
            <person name="Garzon A."/>
            <person name="Thode G."/>
            <person name="Daga R.R."/>
            <person name="Cruzado L."/>
            <person name="Jimenez J."/>
            <person name="Sanchez M."/>
            <person name="del Rey F."/>
            <person name="Benito J."/>
            <person name="Dominguez A."/>
            <person name="Revuelta J.L."/>
            <person name="Moreno S."/>
            <person name="Armstrong J."/>
            <person name="Forsburg S.L."/>
            <person name="Cerutti L."/>
            <person name="Lowe T."/>
            <person name="McCombie W.R."/>
            <person name="Paulsen I."/>
            <person name="Potashkin J."/>
            <person name="Shpakovski G.V."/>
            <person name="Ussery D."/>
            <person name="Barrell B.G."/>
            <person name="Nurse P."/>
        </authorList>
    </citation>
    <scope>NUCLEOTIDE SEQUENCE [LARGE SCALE GENOMIC DNA]</scope>
    <source>
        <strain>972 / ATCC 24843</strain>
    </source>
</reference>
<reference key="2">
    <citation type="journal article" date="2006" name="Nat. Biotechnol.">
        <title>ORFeome cloning and global analysis of protein localization in the fission yeast Schizosaccharomyces pombe.</title>
        <authorList>
            <person name="Matsuyama A."/>
            <person name="Arai R."/>
            <person name="Yashiroda Y."/>
            <person name="Shirai A."/>
            <person name="Kamata A."/>
            <person name="Sekido S."/>
            <person name="Kobayashi Y."/>
            <person name="Hashimoto A."/>
            <person name="Hamamoto M."/>
            <person name="Hiraoka Y."/>
            <person name="Horinouchi S."/>
            <person name="Yoshida M."/>
        </authorList>
    </citation>
    <scope>SUBCELLULAR LOCATION [LARGE SCALE ANALYSIS]</scope>
</reference>
<evidence type="ECO:0000250" key="1">
    <source>
        <dbReference type="UniProtKB" id="P30771"/>
    </source>
</evidence>
<evidence type="ECO:0000250" key="2">
    <source>
        <dbReference type="UniProtKB" id="Q92900"/>
    </source>
</evidence>
<evidence type="ECO:0000255" key="3">
    <source>
        <dbReference type="PROSITE-ProRule" id="PRU01341"/>
    </source>
</evidence>
<evidence type="ECO:0000256" key="4">
    <source>
        <dbReference type="SAM" id="MobiDB-lite"/>
    </source>
</evidence>
<evidence type="ECO:0000269" key="5">
    <source>
    </source>
</evidence>
<evidence type="ECO:0000305" key="6"/>
<accession>Q09820</accession>
<protein>
    <recommendedName>
        <fullName>ATP-dependent helicase upf1</fullName>
        <ecNumber evidence="1">3.6.4.12</ecNumber>
        <ecNumber evidence="2">3.6.4.13</ecNumber>
    </recommendedName>
    <alternativeName>
        <fullName>Nonsense-mediated mRNA decay protein upf1</fullName>
    </alternativeName>
    <alternativeName>
        <fullName>Regulator of nonsense transcripts 1 homolog</fullName>
    </alternativeName>
    <alternativeName>
        <fullName>Up-frameshift suppressor 1</fullName>
    </alternativeName>
</protein>
<feature type="chain" id="PRO_0000080715" description="ATP-dependent helicase upf1">
    <location>
        <begin position="1"/>
        <end position="925"/>
    </location>
</feature>
<feature type="domain" description="Upf1 CH-rich" evidence="3">
    <location>
        <begin position="36"/>
        <end position="193"/>
    </location>
</feature>
<feature type="region of interest" description="C3H" evidence="3">
    <location>
        <begin position="44"/>
        <end position="76"/>
    </location>
</feature>
<feature type="region of interest" description="CC/SHH/C" evidence="3">
    <location>
        <begin position="58"/>
        <end position="86"/>
    </location>
</feature>
<feature type="region of interest" description="C4" evidence="3">
    <location>
        <begin position="104"/>
        <end position="134"/>
    </location>
</feature>
<feature type="region of interest" description="Disordered" evidence="4">
    <location>
        <begin position="906"/>
        <end position="925"/>
    </location>
</feature>
<feature type="compositionally biased region" description="Basic and acidic residues" evidence="4">
    <location>
        <begin position="915"/>
        <end position="925"/>
    </location>
</feature>
<feature type="binding site" evidence="3">
    <location>
        <position position="44"/>
    </location>
    <ligand>
        <name>Zn(2+)</name>
        <dbReference type="ChEBI" id="CHEBI:29105"/>
        <label>1</label>
    </ligand>
</feature>
<feature type="binding site" evidence="3">
    <location>
        <position position="47"/>
    </location>
    <ligand>
        <name>Zn(2+)</name>
        <dbReference type="ChEBI" id="CHEBI:29105"/>
        <label>1</label>
    </ligand>
</feature>
<feature type="binding site" evidence="3">
    <location>
        <position position="58"/>
    </location>
    <ligand>
        <name>Zn(2+)</name>
        <dbReference type="ChEBI" id="CHEBI:29105"/>
        <label>2</label>
    </ligand>
</feature>
<feature type="binding site" evidence="3">
    <location>
        <position position="61"/>
    </location>
    <ligand>
        <name>Zn(2+)</name>
        <dbReference type="ChEBI" id="CHEBI:29105"/>
        <label>2</label>
    </ligand>
</feature>
<feature type="binding site" evidence="3">
    <location>
        <position position="66"/>
    </location>
    <ligand>
        <name>Zn(2+)</name>
        <dbReference type="ChEBI" id="CHEBI:29105"/>
        <label>1</label>
    </ligand>
</feature>
<feature type="binding site" evidence="3">
    <location>
        <position position="76"/>
    </location>
    <ligand>
        <name>Zn(2+)</name>
        <dbReference type="ChEBI" id="CHEBI:29105"/>
        <label>1</label>
    </ligand>
</feature>
<feature type="binding site" evidence="3">
    <location>
        <position position="80"/>
    </location>
    <ligand>
        <name>Zn(2+)</name>
        <dbReference type="ChEBI" id="CHEBI:29105"/>
        <label>2</label>
    </ligand>
</feature>
<feature type="binding site" evidence="3">
    <location>
        <position position="86"/>
    </location>
    <ligand>
        <name>Zn(2+)</name>
        <dbReference type="ChEBI" id="CHEBI:29105"/>
        <label>2</label>
    </ligand>
</feature>
<feature type="binding site" evidence="3">
    <location>
        <position position="104"/>
    </location>
    <ligand>
        <name>Zn(2+)</name>
        <dbReference type="ChEBI" id="CHEBI:29105"/>
        <label>3</label>
    </ligand>
</feature>
<feature type="binding site" evidence="3">
    <location>
        <position position="107"/>
    </location>
    <ligand>
        <name>Zn(2+)</name>
        <dbReference type="ChEBI" id="CHEBI:29105"/>
        <label>3</label>
    </ligand>
</feature>
<feature type="binding site" evidence="3">
    <location>
        <position position="130"/>
    </location>
    <ligand>
        <name>Zn(2+)</name>
        <dbReference type="ChEBI" id="CHEBI:29105"/>
        <label>3</label>
    </ligand>
</feature>
<feature type="binding site" evidence="3">
    <location>
        <position position="134"/>
    </location>
    <ligand>
        <name>Zn(2+)</name>
        <dbReference type="ChEBI" id="CHEBI:29105"/>
        <label>3</label>
    </ligand>
</feature>
<feature type="binding site" evidence="2">
    <location>
        <position position="397"/>
    </location>
    <ligand>
        <name>ATP</name>
        <dbReference type="ChEBI" id="CHEBI:30616"/>
    </ligand>
</feature>
<feature type="binding site" evidence="2">
    <location>
        <begin position="417"/>
        <end position="421"/>
    </location>
    <ligand>
        <name>ATP</name>
        <dbReference type="ChEBI" id="CHEBI:30616"/>
    </ligand>
</feature>
<feature type="binding site" evidence="2">
    <location>
        <position position="593"/>
    </location>
    <ligand>
        <name>ATP</name>
        <dbReference type="ChEBI" id="CHEBI:30616"/>
    </ligand>
</feature>
<feature type="binding site" evidence="2">
    <location>
        <position position="630"/>
    </location>
    <ligand>
        <name>ATP</name>
        <dbReference type="ChEBI" id="CHEBI:30616"/>
    </ligand>
</feature>
<feature type="binding site" evidence="2">
    <location>
        <position position="761"/>
    </location>
    <ligand>
        <name>ATP</name>
        <dbReference type="ChEBI" id="CHEBI:30616"/>
    </ligand>
</feature>
<proteinExistence type="inferred from homology"/>